<accession>B4GW22</accession>
<feature type="chain" id="PRO_0000385237" description="Nuclear cap-binding protein subunit 1">
    <location>
        <begin position="1"/>
        <end position="800"/>
    </location>
</feature>
<feature type="domain" description="MIF4G">
    <location>
        <begin position="31"/>
        <end position="243"/>
    </location>
</feature>
<feature type="region of interest" description="Disordered" evidence="2">
    <location>
        <begin position="1"/>
        <end position="26"/>
    </location>
</feature>
<feature type="region of interest" description="Disordered" evidence="2">
    <location>
        <begin position="669"/>
        <end position="704"/>
    </location>
</feature>
<feature type="compositionally biased region" description="Basic and acidic residues" evidence="2">
    <location>
        <begin position="692"/>
        <end position="704"/>
    </location>
</feature>
<feature type="modified residue" description="Phosphothreonine" evidence="1">
    <location>
        <position position="9"/>
    </location>
</feature>
<name>NCBP1_DROPE</name>
<dbReference type="EMBL" id="CH479193">
    <property type="protein sequence ID" value="EDW26867.1"/>
    <property type="molecule type" value="Genomic_DNA"/>
</dbReference>
<dbReference type="SMR" id="B4GW22"/>
<dbReference type="STRING" id="7234.B4GW22"/>
<dbReference type="EnsemblMetazoa" id="FBtr0180375">
    <property type="protein sequence ID" value="FBpp0178867"/>
    <property type="gene ID" value="FBgn0152364"/>
</dbReference>
<dbReference type="EnsemblMetazoa" id="XM_002022765.2">
    <property type="protein sequence ID" value="XP_002022801.1"/>
    <property type="gene ID" value="LOC6597552"/>
</dbReference>
<dbReference type="GeneID" id="6597552"/>
<dbReference type="KEGG" id="dpe:6597552"/>
<dbReference type="CTD" id="44409"/>
<dbReference type="eggNOG" id="KOG1104">
    <property type="taxonomic scope" value="Eukaryota"/>
</dbReference>
<dbReference type="HOGENOM" id="CLU_013207_0_0_1"/>
<dbReference type="OMA" id="CAAEGLM"/>
<dbReference type="OrthoDB" id="10252707at2759"/>
<dbReference type="PhylomeDB" id="B4GW22"/>
<dbReference type="ChiTaRS" id="Cbp80">
    <property type="organism name" value="fly"/>
</dbReference>
<dbReference type="Proteomes" id="UP000008744">
    <property type="component" value="Unassembled WGS sequence"/>
</dbReference>
<dbReference type="GO" id="GO:0005846">
    <property type="term" value="C:nuclear cap binding complex"/>
    <property type="evidence" value="ECO:0007669"/>
    <property type="project" value="InterPro"/>
</dbReference>
<dbReference type="GO" id="GO:0005634">
    <property type="term" value="C:nucleus"/>
    <property type="evidence" value="ECO:0007669"/>
    <property type="project" value="UniProtKB-SubCell"/>
</dbReference>
<dbReference type="GO" id="GO:0099524">
    <property type="term" value="C:postsynaptic cytosol"/>
    <property type="evidence" value="ECO:0007669"/>
    <property type="project" value="EnsemblMetazoa"/>
</dbReference>
<dbReference type="GO" id="GO:0099523">
    <property type="term" value="C:presynaptic cytosol"/>
    <property type="evidence" value="ECO:0007669"/>
    <property type="project" value="EnsemblMetazoa"/>
</dbReference>
<dbReference type="GO" id="GO:0003729">
    <property type="term" value="F:mRNA binding"/>
    <property type="evidence" value="ECO:0007669"/>
    <property type="project" value="TreeGrafter"/>
</dbReference>
<dbReference type="GO" id="GO:0000339">
    <property type="term" value="F:RNA cap binding"/>
    <property type="evidence" value="ECO:0007669"/>
    <property type="project" value="InterPro"/>
</dbReference>
<dbReference type="GO" id="GO:0006370">
    <property type="term" value="P:7-methylguanosine mRNA capping"/>
    <property type="evidence" value="ECO:0007669"/>
    <property type="project" value="UniProtKB-KW"/>
</dbReference>
<dbReference type="GO" id="GO:0006406">
    <property type="term" value="P:mRNA export from nucleus"/>
    <property type="evidence" value="ECO:0007669"/>
    <property type="project" value="InterPro"/>
</dbReference>
<dbReference type="GO" id="GO:0045071">
    <property type="term" value="P:negative regulation of viral genome replication"/>
    <property type="evidence" value="ECO:0007669"/>
    <property type="project" value="EnsemblMetazoa"/>
</dbReference>
<dbReference type="GO" id="GO:0000184">
    <property type="term" value="P:nuclear-transcribed mRNA catabolic process, nonsense-mediated decay"/>
    <property type="evidence" value="ECO:0007669"/>
    <property type="project" value="TreeGrafter"/>
</dbReference>
<dbReference type="GO" id="GO:0031053">
    <property type="term" value="P:primary miRNA processing"/>
    <property type="evidence" value="ECO:0007669"/>
    <property type="project" value="EnsemblMetazoa"/>
</dbReference>
<dbReference type="GO" id="GO:0035194">
    <property type="term" value="P:regulatory ncRNA-mediated post-transcriptional gene silencing"/>
    <property type="evidence" value="ECO:0007669"/>
    <property type="project" value="EnsemblMetazoa"/>
</dbReference>
<dbReference type="GO" id="GO:0008380">
    <property type="term" value="P:RNA splicing"/>
    <property type="evidence" value="ECO:0007669"/>
    <property type="project" value="UniProtKB-KW"/>
</dbReference>
<dbReference type="GO" id="GO:0030422">
    <property type="term" value="P:siRNA processing"/>
    <property type="evidence" value="ECO:0007669"/>
    <property type="project" value="EnsemblMetazoa"/>
</dbReference>
<dbReference type="FunFam" id="1.25.40.180:FF:000010">
    <property type="entry name" value="Nuclear cap-binding protein subunit 1"/>
    <property type="match status" value="1"/>
</dbReference>
<dbReference type="FunFam" id="1.25.40.180:FF:000041">
    <property type="entry name" value="Nuclear cap-binding protein subunit 1"/>
    <property type="match status" value="1"/>
</dbReference>
<dbReference type="Gene3D" id="1.25.40.180">
    <property type="match status" value="3"/>
</dbReference>
<dbReference type="InterPro" id="IPR016024">
    <property type="entry name" value="ARM-type_fold"/>
</dbReference>
<dbReference type="InterPro" id="IPR027159">
    <property type="entry name" value="CBP80"/>
</dbReference>
<dbReference type="InterPro" id="IPR015172">
    <property type="entry name" value="MIF4G-like_typ-1"/>
</dbReference>
<dbReference type="InterPro" id="IPR015174">
    <property type="entry name" value="MIF4G-like_typ-2"/>
</dbReference>
<dbReference type="InterPro" id="IPR003890">
    <property type="entry name" value="MIF4G-like_typ-3"/>
</dbReference>
<dbReference type="PANTHER" id="PTHR12412">
    <property type="entry name" value="CAP BINDING PROTEIN"/>
    <property type="match status" value="1"/>
</dbReference>
<dbReference type="PANTHER" id="PTHR12412:SF2">
    <property type="entry name" value="NUCLEAR CAP-BINDING PROTEIN SUBUNIT 1"/>
    <property type="match status" value="1"/>
</dbReference>
<dbReference type="Pfam" id="PF02854">
    <property type="entry name" value="MIF4G"/>
    <property type="match status" value="1"/>
</dbReference>
<dbReference type="Pfam" id="PF09088">
    <property type="entry name" value="MIF4G_like"/>
    <property type="match status" value="1"/>
</dbReference>
<dbReference type="Pfam" id="PF09090">
    <property type="entry name" value="MIF4G_like_2"/>
    <property type="match status" value="1"/>
</dbReference>
<dbReference type="SMART" id="SM00543">
    <property type="entry name" value="MIF4G"/>
    <property type="match status" value="1"/>
</dbReference>
<dbReference type="SUPFAM" id="SSF48371">
    <property type="entry name" value="ARM repeat"/>
    <property type="match status" value="3"/>
</dbReference>
<organism>
    <name type="scientific">Drosophila persimilis</name>
    <name type="common">Fruit fly</name>
    <dbReference type="NCBI Taxonomy" id="7234"/>
    <lineage>
        <taxon>Eukaryota</taxon>
        <taxon>Metazoa</taxon>
        <taxon>Ecdysozoa</taxon>
        <taxon>Arthropoda</taxon>
        <taxon>Hexapoda</taxon>
        <taxon>Insecta</taxon>
        <taxon>Pterygota</taxon>
        <taxon>Neoptera</taxon>
        <taxon>Endopterygota</taxon>
        <taxon>Diptera</taxon>
        <taxon>Brachycera</taxon>
        <taxon>Muscomorpha</taxon>
        <taxon>Ephydroidea</taxon>
        <taxon>Drosophilidae</taxon>
        <taxon>Drosophila</taxon>
        <taxon>Sophophora</taxon>
    </lineage>
</organism>
<gene>
    <name type="primary">Cbp80</name>
    <name type="ORF">GL14760</name>
</gene>
<sequence length="800" mass="93069">MSRRRAHDTEDEGYDHRRNKRRRVSENQEIEDRLESLILRVGERSTSSVESNLEGLVSVLEADLGTFRLKILRILSDCAVRMPEKCTVYTTLVGLLNAKNYKFGGEFVDHMVKTFKESLKMCRWDAARYSLRFLADLVNCHVISATSLLQLLDTMIDVSNEDTVPQVRRDWFVFAVLSTLPWVGRDLYEKKESALESLLLRIEVYLNKRSKKHHNALRVWSSDAPHPQEEYLDCLWAQIRKLRQDNWAEKHIPRPYLTFDTILCEALQHNLPQIIPPPHNDAFVYPMPWVVYRMFDYTDCPDGPNLPGAHSIERFLIEEHLHHIIETYHHERKDCAAQLLSFPFKHKIPLEYCIVEVIFAELFHMPTPRYLDICYGSILIELCKLQPATLPQVLAQATEILFMRIDSMNTSCFDRFVNWFSYHLSNFKFTWSWDEWDSCLLLDGEHPRPKFIQEVLQKCLRLSYHQRITEMMPTTYGKLIPQVPVPNFKYASEEAASLPGTAVAHQLVVAIRQKCSPEEVVNILKEIPNSGYSGEEMSDGTFNALKIDVFVQTLLNLGSKSFSHSFAAISKFHSVFRALAETEEAQICVLHNIYELWSSHQQMMVVLVDKLLKLQIVDCSAVATWIFSKEMTSEFTKMYLWEILHLTIKKMNKHVIKLNTELSVAKDKLSKADSSSSESDEDAPTKRKKPITHADKPSEEAVERMEEKLEAANVNQKRLFLIVFQRFIMILSEHMLRSDTDGRDPDTDWYRWTIGRLQQVFLMHHEQVQKYSSTLETLLFTSDLDTHILEVFQQFVALRA</sequence>
<proteinExistence type="inferred from homology"/>
<comment type="function">
    <text evidence="1">Component of the cap-binding complex (CBC), which binds cotranscriptionally to the 5'-cap of pre-mRNAs and is involved in various processes such as pre-mRNA splicing and RNA-mediated gene silencing (RNAi). The CBC complex is involved in miRNA-mediated RNA interference via its interaction with Ars2 and is required for primary microRNAs (miRNAs) processing. Also involved in innate immunity via the short interfering RNAs (siRNAs) processing machinery by restricting the viral RNA production. In the CBC complex, Cbp80 does not bind directly capped RNAs (m7GpppG-capped RNA) but is required to stabilize the movement of the N-terminal loop of Cbp20 and lock the CBC into a high affinity cap-binding state with the cap structure (By similarity).</text>
</comment>
<comment type="subunit">
    <text evidence="1">Component of the nuclear cap-binding complex (CBC), a heterodimer composed of Cbp80 and Cbp20 that interacts with m7GpppG-capped RNA.</text>
</comment>
<comment type="subcellular location">
    <subcellularLocation>
        <location evidence="1">Nucleus</location>
    </subcellularLocation>
</comment>
<comment type="similarity">
    <text evidence="3">Belongs to the NCBP1 family.</text>
</comment>
<protein>
    <recommendedName>
        <fullName>Nuclear cap-binding protein subunit 1</fullName>
    </recommendedName>
    <alternativeName>
        <fullName>80 kDa nuclear cap-binding protein</fullName>
        <shortName>CBP80</shortName>
        <shortName>NCBP 80 kDa subunit</shortName>
    </alternativeName>
</protein>
<reference key="1">
    <citation type="journal article" date="2007" name="Nature">
        <title>Evolution of genes and genomes on the Drosophila phylogeny.</title>
        <authorList>
            <consortium name="Drosophila 12 genomes consortium"/>
        </authorList>
    </citation>
    <scope>NUCLEOTIDE SEQUENCE [LARGE SCALE GENOMIC DNA]</scope>
    <source>
        <strain>MSH-3 / Tucson 14011-0111.49</strain>
    </source>
</reference>
<evidence type="ECO:0000250" key="1"/>
<evidence type="ECO:0000256" key="2">
    <source>
        <dbReference type="SAM" id="MobiDB-lite"/>
    </source>
</evidence>
<evidence type="ECO:0000305" key="3"/>
<keyword id="KW-0506">mRNA capping</keyword>
<keyword id="KW-0507">mRNA processing</keyword>
<keyword id="KW-0508">mRNA splicing</keyword>
<keyword id="KW-0539">Nucleus</keyword>
<keyword id="KW-0597">Phosphoprotein</keyword>
<keyword id="KW-1185">Reference proteome</keyword>
<keyword id="KW-0943">RNA-mediated gene silencing</keyword>